<reference key="1">
    <citation type="journal article" date="2003" name="Nature">
        <title>The DNA sequence of human chromosome 7.</title>
        <authorList>
            <person name="Hillier L.W."/>
            <person name="Fulton R.S."/>
            <person name="Fulton L.A."/>
            <person name="Graves T.A."/>
            <person name="Pepin K.H."/>
            <person name="Wagner-McPherson C."/>
            <person name="Layman D."/>
            <person name="Maas J."/>
            <person name="Jaeger S."/>
            <person name="Walker R."/>
            <person name="Wylie K."/>
            <person name="Sekhon M."/>
            <person name="Becker M.C."/>
            <person name="O'Laughlin M.D."/>
            <person name="Schaller M.E."/>
            <person name="Fewell G.A."/>
            <person name="Delehaunty K.D."/>
            <person name="Miner T.L."/>
            <person name="Nash W.E."/>
            <person name="Cordes M."/>
            <person name="Du H."/>
            <person name="Sun H."/>
            <person name="Edwards J."/>
            <person name="Bradshaw-Cordum H."/>
            <person name="Ali J."/>
            <person name="Andrews S."/>
            <person name="Isak A."/>
            <person name="Vanbrunt A."/>
            <person name="Nguyen C."/>
            <person name="Du F."/>
            <person name="Lamar B."/>
            <person name="Courtney L."/>
            <person name="Kalicki J."/>
            <person name="Ozersky P."/>
            <person name="Bielicki L."/>
            <person name="Scott K."/>
            <person name="Holmes A."/>
            <person name="Harkins R."/>
            <person name="Harris A."/>
            <person name="Strong C.M."/>
            <person name="Hou S."/>
            <person name="Tomlinson C."/>
            <person name="Dauphin-Kohlberg S."/>
            <person name="Kozlowicz-Reilly A."/>
            <person name="Leonard S."/>
            <person name="Rohlfing T."/>
            <person name="Rock S.M."/>
            <person name="Tin-Wollam A.-M."/>
            <person name="Abbott A."/>
            <person name="Minx P."/>
            <person name="Maupin R."/>
            <person name="Strowmatt C."/>
            <person name="Latreille P."/>
            <person name="Miller N."/>
            <person name="Johnson D."/>
            <person name="Murray J."/>
            <person name="Woessner J.P."/>
            <person name="Wendl M.C."/>
            <person name="Yang S.-P."/>
            <person name="Schultz B.R."/>
            <person name="Wallis J.W."/>
            <person name="Spieth J."/>
            <person name="Bieri T.A."/>
            <person name="Nelson J.O."/>
            <person name="Berkowicz N."/>
            <person name="Wohldmann P.E."/>
            <person name="Cook L.L."/>
            <person name="Hickenbotham M.T."/>
            <person name="Eldred J."/>
            <person name="Williams D."/>
            <person name="Bedell J.A."/>
            <person name="Mardis E.R."/>
            <person name="Clifton S.W."/>
            <person name="Chissoe S.L."/>
            <person name="Marra M.A."/>
            <person name="Raymond C."/>
            <person name="Haugen E."/>
            <person name="Gillett W."/>
            <person name="Zhou Y."/>
            <person name="James R."/>
            <person name="Phelps K."/>
            <person name="Iadanoto S."/>
            <person name="Bubb K."/>
            <person name="Simms E."/>
            <person name="Levy R."/>
            <person name="Clendenning J."/>
            <person name="Kaul R."/>
            <person name="Kent W.J."/>
            <person name="Furey T.S."/>
            <person name="Baertsch R.A."/>
            <person name="Brent M.R."/>
            <person name="Keibler E."/>
            <person name="Flicek P."/>
            <person name="Bork P."/>
            <person name="Suyama M."/>
            <person name="Bailey J.A."/>
            <person name="Portnoy M.E."/>
            <person name="Torrents D."/>
            <person name="Chinwalla A.T."/>
            <person name="Gish W.R."/>
            <person name="Eddy S.R."/>
            <person name="McPherson J.D."/>
            <person name="Olson M.V."/>
            <person name="Eichler E.E."/>
            <person name="Green E.D."/>
            <person name="Waterston R.H."/>
            <person name="Wilson R.K."/>
        </authorList>
    </citation>
    <scope>NUCLEOTIDE SEQUENCE [LARGE SCALE GENOMIC DNA]</scope>
</reference>
<reference key="2">
    <citation type="submission" date="2005-07" db="EMBL/GenBank/DDBJ databases">
        <authorList>
            <person name="Mural R.J."/>
            <person name="Istrail S."/>
            <person name="Sutton G.G."/>
            <person name="Florea L."/>
            <person name="Halpern A.L."/>
            <person name="Mobarry C.M."/>
            <person name="Lippert R."/>
            <person name="Walenz B."/>
            <person name="Shatkay H."/>
            <person name="Dew I."/>
            <person name="Miller J.R."/>
            <person name="Flanigan M.J."/>
            <person name="Edwards N.J."/>
            <person name="Bolanos R."/>
            <person name="Fasulo D."/>
            <person name="Halldorsson B.V."/>
            <person name="Hannenhalli S."/>
            <person name="Turner R."/>
            <person name="Yooseph S."/>
            <person name="Lu F."/>
            <person name="Nusskern D.R."/>
            <person name="Shue B.C."/>
            <person name="Zheng X.H."/>
            <person name="Zhong F."/>
            <person name="Delcher A.L."/>
            <person name="Huson D.H."/>
            <person name="Kravitz S.A."/>
            <person name="Mouchard L."/>
            <person name="Reinert K."/>
            <person name="Remington K.A."/>
            <person name="Clark A.G."/>
            <person name="Waterman M.S."/>
            <person name="Eichler E.E."/>
            <person name="Adams M.D."/>
            <person name="Hunkapiller M.W."/>
            <person name="Myers E.W."/>
            <person name="Venter J.C."/>
        </authorList>
    </citation>
    <scope>NUCLEOTIDE SEQUENCE [LARGE SCALE GENOMIC DNA]</scope>
</reference>
<reference key="3">
    <citation type="journal article" date="2004" name="Genome Res.">
        <title>The status, quality, and expansion of the NIH full-length cDNA project: the Mammalian Gene Collection (MGC).</title>
        <authorList>
            <consortium name="The MGC Project Team"/>
        </authorList>
    </citation>
    <scope>NUCLEOTIDE SEQUENCE [LARGE SCALE MRNA] (ISOFORM 2)</scope>
</reference>
<comment type="subcellular location">
    <subcellularLocation>
        <location evidence="5">Membrane</location>
        <topology evidence="5">Multi-pass membrane protein</topology>
    </subcellularLocation>
</comment>
<comment type="alternative products">
    <event type="alternative splicing"/>
    <isoform>
        <id>C9JH25-1</id>
        <name>1</name>
        <sequence type="displayed"/>
    </isoform>
    <isoform>
        <id>C9JH25-2</id>
        <name>2</name>
        <sequence type="described" ref="VSP_039273 VSP_039275"/>
    </isoform>
    <isoform>
        <id>C9JH25-3</id>
        <name>3</name>
        <sequence type="described" ref="VSP_039274"/>
    </isoform>
</comment>
<feature type="signal peptide" evidence="2">
    <location>
        <begin position="1"/>
        <end position="23"/>
    </location>
</feature>
<feature type="chain" id="PRO_0000394498" description="Proline-rich transmembrane protein 4">
    <location>
        <begin position="24"/>
        <end position="899"/>
    </location>
</feature>
<feature type="transmembrane region" description="Helical" evidence="2">
    <location>
        <begin position="370"/>
        <end position="390"/>
    </location>
</feature>
<feature type="transmembrane region" description="Helical" evidence="2">
    <location>
        <begin position="392"/>
        <end position="412"/>
    </location>
</feature>
<feature type="transmembrane region" description="Helical" evidence="2">
    <location>
        <begin position="430"/>
        <end position="450"/>
    </location>
</feature>
<feature type="transmembrane region" description="Helical" evidence="2">
    <location>
        <begin position="467"/>
        <end position="487"/>
    </location>
</feature>
<feature type="transmembrane region" description="Helical" evidence="2">
    <location>
        <begin position="500"/>
        <end position="520"/>
    </location>
</feature>
<feature type="region of interest" description="Disordered" evidence="3">
    <location>
        <begin position="110"/>
        <end position="152"/>
    </location>
</feature>
<feature type="region of interest" description="Disordered" evidence="3">
    <location>
        <begin position="295"/>
        <end position="340"/>
    </location>
</feature>
<feature type="region of interest" description="Disordered" evidence="3">
    <location>
        <begin position="769"/>
        <end position="797"/>
    </location>
</feature>
<feature type="region of interest" description="Disordered" evidence="3">
    <location>
        <begin position="839"/>
        <end position="869"/>
    </location>
</feature>
<feature type="compositionally biased region" description="Low complexity" evidence="3">
    <location>
        <begin position="840"/>
        <end position="851"/>
    </location>
</feature>
<feature type="modified residue" description="Phosphoserine" evidence="1">
    <location>
        <position position="641"/>
    </location>
</feature>
<feature type="splice variant" id="VSP_039274" description="In isoform 3." evidence="5">
    <location>
        <begin position="370"/>
        <end position="575"/>
    </location>
</feature>
<feature type="splice variant" id="VSP_039273" description="In isoform 2." evidence="4">
    <original>VGALFGLVALLALLALALLPWRCPPGAPCLALLDLLLLSAGTTRAFPLFYDAYGHRDRLP</original>
    <variation>RLHRGLPPALPNQPATQHRGGPLQRGPACAWPLPGPCLRGRSAWARTLPHRLAGDRGQGQ</variation>
    <location>
        <begin position="370"/>
        <end position="429"/>
    </location>
</feature>
<feature type="splice variant" id="VSP_039275" description="In isoform 2." evidence="4">
    <location>
        <begin position="430"/>
        <end position="899"/>
    </location>
</feature>
<organism>
    <name type="scientific">Homo sapiens</name>
    <name type="common">Human</name>
    <dbReference type="NCBI Taxonomy" id="9606"/>
    <lineage>
        <taxon>Eukaryota</taxon>
        <taxon>Metazoa</taxon>
        <taxon>Chordata</taxon>
        <taxon>Craniata</taxon>
        <taxon>Vertebrata</taxon>
        <taxon>Euteleostomi</taxon>
        <taxon>Mammalia</taxon>
        <taxon>Eutheria</taxon>
        <taxon>Euarchontoglires</taxon>
        <taxon>Primates</taxon>
        <taxon>Haplorrhini</taxon>
        <taxon>Catarrhini</taxon>
        <taxon>Hominidae</taxon>
        <taxon>Homo</taxon>
    </lineage>
</organism>
<name>PRRT4_HUMAN</name>
<evidence type="ECO:0000250" key="1">
    <source>
        <dbReference type="UniProtKB" id="B2RU40"/>
    </source>
</evidence>
<evidence type="ECO:0000255" key="2"/>
<evidence type="ECO:0000256" key="3">
    <source>
        <dbReference type="SAM" id="MobiDB-lite"/>
    </source>
</evidence>
<evidence type="ECO:0000303" key="4">
    <source>
    </source>
</evidence>
<evidence type="ECO:0000305" key="5"/>
<proteinExistence type="evidence at protein level"/>
<protein>
    <recommendedName>
        <fullName>Proline-rich transmembrane protein 4</fullName>
    </recommendedName>
</protein>
<keyword id="KW-0025">Alternative splicing</keyword>
<keyword id="KW-0472">Membrane</keyword>
<keyword id="KW-0597">Phosphoprotein</keyword>
<keyword id="KW-1267">Proteomics identification</keyword>
<keyword id="KW-1185">Reference proteome</keyword>
<keyword id="KW-0732">Signal</keyword>
<keyword id="KW-0812">Transmembrane</keyword>
<keyword id="KW-1133">Transmembrane helix</keyword>
<accession>C9JH25</accession>
<accession>A4D0Z9</accession>
<accession>C9JVW7</accession>
<sequence length="899" mass="92712">MARHGCLGLGLFCCVLFAATVGPQPTPSIPGAPATTLTPVPQSEASMLSLNLGLNFKFHLRGPAAVWGSPVTETQPLSLGPGQEPGEEVASGLRTDPLWELLVGSSGNSLTEWGSTEGGSKPRASSLLPESTSRRSGPSDGPTAPYQPRRSTVTWDTALMVTALPSSAPRPHQSELELKFDMALRAGAAPTLGHRTLPLLPSLRASLAEIAGRLGPFGFFGTTLSPLRNFSGLSPPGETTSTSSASGVSGSLGFLGTTLSLPPYSLERKLSSPSPLDPAASLSFASIATTSLDPTVPISGPDDLSPPASLGNPSGQPECGPGSCSVGELPEREGQPPEAPRPLFFLTLEADWAEARARWGLAWEAHVYGVGALFGLVALLALLALALLPWRCPPGAPCLALLDLLLLSAGTTRAFPLFYDAYGHRDRLPALAWLLLQDLPLPCLAAGLGLACLLLARPRPPRCPTGLAALLLLGLGLAAAAALGSAAHRPLRPLRLASRGLHAFLAAFLSGLLLALSCWGGRRRRAGAPLGGSGFKGATPLPQGRSPFAPRESWRRAARTAPVAGTFGLLSGALQGYEVLHALGYGGQSGLEGPWPWWAFQLGLRLGEVGVALPLALLGLYPALCSPRVPPRCWAKLFRLSPGHAAPLLPGGWVTGPPDKEPLGSAIARGDAELLQLCALAGPGPDLLLQGGGCRGFEGAAANPAPSPASSPCSDYTVDFRPPSPINLRRSIEEALCSEALLAPGLFQGPAFEDALPGLGLYRTASLGTGGRASERSGEASGPAAPPELPSPGAWPAGSSVSSGSFCGLSRDSSSMLLCSSPDRPPRCPLVCVLSPPRPSGSSPSLPASGSYQALSPPSRDSPEPASELQAEEALLQEQFLDACRQIDELSVGSDTIDL</sequence>
<gene>
    <name type="primary">PRRT4</name>
</gene>
<dbReference type="EMBL" id="AC010655">
    <property type="status" value="NOT_ANNOTATED_CDS"/>
    <property type="molecule type" value="Genomic_DNA"/>
</dbReference>
<dbReference type="EMBL" id="CH236947">
    <property type="protein sequence ID" value="EAL24313.1"/>
    <property type="molecule type" value="Genomic_DNA"/>
</dbReference>
<dbReference type="EMBL" id="CH471070">
    <property type="protein sequence ID" value="EAW83645.1"/>
    <property type="molecule type" value="Genomic_DNA"/>
</dbReference>
<dbReference type="EMBL" id="BC063892">
    <property type="status" value="NOT_ANNOTATED_CDS"/>
    <property type="molecule type" value="mRNA"/>
</dbReference>
<dbReference type="CCDS" id="CCDS47698.2">
    <molecule id="C9JH25-2"/>
</dbReference>
<dbReference type="CCDS" id="CCDS55160.1">
    <molecule id="C9JH25-1"/>
</dbReference>
<dbReference type="RefSeq" id="NP_001108198.2">
    <molecule id="C9JH25-2"/>
    <property type="nucleotide sequence ID" value="NM_001114726.3"/>
</dbReference>
<dbReference type="RefSeq" id="NP_001167635.1">
    <molecule id="C9JH25-1"/>
    <property type="nucleotide sequence ID" value="NM_001174164.2"/>
</dbReference>
<dbReference type="RefSeq" id="NP_001382358.1">
    <molecule id="C9JH25-1"/>
    <property type="nucleotide sequence ID" value="NM_001395429.1"/>
</dbReference>
<dbReference type="RefSeq" id="NP_001392421.1">
    <molecule id="C9JH25-2"/>
    <property type="nucleotide sequence ID" value="NM_001405492.1"/>
</dbReference>
<dbReference type="RefSeq" id="NP_001392422.1">
    <molecule id="C9JH25-2"/>
    <property type="nucleotide sequence ID" value="NM_001405493.1"/>
</dbReference>
<dbReference type="RefSeq" id="NP_001392423.1">
    <molecule id="C9JH25-2"/>
    <property type="nucleotide sequence ID" value="NM_001405494.1"/>
</dbReference>
<dbReference type="RefSeq" id="XP_005250399.1">
    <property type="nucleotide sequence ID" value="XM_005250342.3"/>
</dbReference>
<dbReference type="RefSeq" id="XP_005250400.1">
    <property type="nucleotide sequence ID" value="XM_005250343.3"/>
</dbReference>
<dbReference type="RefSeq" id="XP_006716048.1">
    <property type="nucleotide sequence ID" value="XM_006715985.3"/>
</dbReference>
<dbReference type="RefSeq" id="XP_016867694.1">
    <property type="nucleotide sequence ID" value="XM_017012205.1"/>
</dbReference>
<dbReference type="RefSeq" id="XP_016867695.1">
    <molecule id="C9JH25-2"/>
    <property type="nucleotide sequence ID" value="XM_017012206.2"/>
</dbReference>
<dbReference type="RefSeq" id="XP_047276324.1">
    <molecule id="C9JH25-2"/>
    <property type="nucleotide sequence ID" value="XM_047420368.1"/>
</dbReference>
<dbReference type="RefSeq" id="XP_047276325.1">
    <molecule id="C9JH25-2"/>
    <property type="nucleotide sequence ID" value="XM_047420369.1"/>
</dbReference>
<dbReference type="RefSeq" id="XP_047276327.1">
    <molecule id="C9JH25-2"/>
    <property type="nucleotide sequence ID" value="XM_047420371.1"/>
</dbReference>
<dbReference type="RefSeq" id="XP_054214184.1">
    <molecule id="C9JH25-2"/>
    <property type="nucleotide sequence ID" value="XM_054358209.1"/>
</dbReference>
<dbReference type="RefSeq" id="XP_054214185.1">
    <molecule id="C9JH25-2"/>
    <property type="nucleotide sequence ID" value="XM_054358210.1"/>
</dbReference>
<dbReference type="RefSeq" id="XP_054214186.1">
    <molecule id="C9JH25-2"/>
    <property type="nucleotide sequence ID" value="XM_054358211.1"/>
</dbReference>
<dbReference type="BioGRID" id="135071">
    <property type="interactions" value="15"/>
</dbReference>
<dbReference type="FunCoup" id="C9JH25">
    <property type="interactions" value="81"/>
</dbReference>
<dbReference type="IntAct" id="C9JH25">
    <property type="interactions" value="2"/>
</dbReference>
<dbReference type="STRING" id="9606.ENSP00000415026"/>
<dbReference type="GlyCosmos" id="C9JH25">
    <property type="glycosylation" value="1 site, 1 glycan"/>
</dbReference>
<dbReference type="GlyGen" id="C9JH25">
    <property type="glycosylation" value="6 sites, 2 O-linked glycans (5 sites)"/>
</dbReference>
<dbReference type="iPTMnet" id="C9JH25"/>
<dbReference type="PhosphoSitePlus" id="C9JH25"/>
<dbReference type="BioMuta" id="PRRT4"/>
<dbReference type="MassIVE" id="C9JH25"/>
<dbReference type="PaxDb" id="9606-ENSP00000415026"/>
<dbReference type="PeptideAtlas" id="C9JH25"/>
<dbReference type="ProteomicsDB" id="10169">
    <molecule id="C9JH25-1"/>
</dbReference>
<dbReference type="ProteomicsDB" id="10170">
    <molecule id="C9JH25-2"/>
</dbReference>
<dbReference type="ProteomicsDB" id="10171">
    <molecule id="C9JH25-3"/>
</dbReference>
<dbReference type="Antibodypedia" id="67265">
    <property type="antibodies" value="70 antibodies from 13 providers"/>
</dbReference>
<dbReference type="DNASU" id="401399"/>
<dbReference type="Ensembl" id="ENST00000446477.7">
    <molecule id="C9JH25-1"/>
    <property type="protein sequence ID" value="ENSP00000415026.2"/>
    <property type="gene ID" value="ENSG00000224940.10"/>
</dbReference>
<dbReference type="Ensembl" id="ENST00000489835.6">
    <molecule id="C9JH25-2"/>
    <property type="protein sequence ID" value="ENSP00000419296.2"/>
    <property type="gene ID" value="ENSG00000224940.10"/>
</dbReference>
<dbReference type="Ensembl" id="ENST00000535159.5">
    <molecule id="C9JH25-1"/>
    <property type="protein sequence ID" value="ENSP00000445239.1"/>
    <property type="gene ID" value="ENSG00000224940.10"/>
</dbReference>
<dbReference type="GeneID" id="401399"/>
<dbReference type="KEGG" id="hsa:401399"/>
<dbReference type="MANE-Select" id="ENST00000446477.7">
    <property type="protein sequence ID" value="ENSP00000415026.2"/>
    <property type="RefSeq nucleotide sequence ID" value="NM_001174164.2"/>
    <property type="RefSeq protein sequence ID" value="NP_001167635.1"/>
</dbReference>
<dbReference type="UCSC" id="uc022akx.2">
    <molecule id="C9JH25-1"/>
    <property type="organism name" value="human"/>
</dbReference>
<dbReference type="AGR" id="HGNC:37280"/>
<dbReference type="CTD" id="401399"/>
<dbReference type="GeneCards" id="PRRT4"/>
<dbReference type="HGNC" id="HGNC:37280">
    <property type="gene designation" value="PRRT4"/>
</dbReference>
<dbReference type="HPA" id="ENSG00000224940">
    <property type="expression patterns" value="Group enriched (adipose tissue, bone marrow)"/>
</dbReference>
<dbReference type="neXtProt" id="NX_C9JH25"/>
<dbReference type="OpenTargets" id="ENSG00000224940"/>
<dbReference type="PharmGKB" id="PA165618245"/>
<dbReference type="VEuPathDB" id="HostDB:ENSG00000224940"/>
<dbReference type="eggNOG" id="ENOG502QU49">
    <property type="taxonomic scope" value="Eukaryota"/>
</dbReference>
<dbReference type="GeneTree" id="ENSGT00730000111591"/>
<dbReference type="HOGENOM" id="CLU_351937_0_0_1"/>
<dbReference type="InParanoid" id="C9JH25"/>
<dbReference type="OMA" id="ARCWAKL"/>
<dbReference type="OrthoDB" id="10066605at2759"/>
<dbReference type="PAN-GO" id="C9JH25">
    <property type="GO annotations" value="0 GO annotations based on evolutionary models"/>
</dbReference>
<dbReference type="PhylomeDB" id="C9JH25"/>
<dbReference type="PathwayCommons" id="C9JH25"/>
<dbReference type="BioGRID-ORCS" id="401399">
    <property type="hits" value="22 hits in 1145 CRISPR screens"/>
</dbReference>
<dbReference type="ChiTaRS" id="PRRT4">
    <property type="organism name" value="human"/>
</dbReference>
<dbReference type="GenomeRNAi" id="401399"/>
<dbReference type="Pharos" id="C9JH25">
    <property type="development level" value="Tdark"/>
</dbReference>
<dbReference type="PRO" id="PR:C9JH25"/>
<dbReference type="Proteomes" id="UP000005640">
    <property type="component" value="Chromosome 7"/>
</dbReference>
<dbReference type="RNAct" id="C9JH25">
    <property type="molecule type" value="protein"/>
</dbReference>
<dbReference type="Bgee" id="ENSG00000224940">
    <property type="expression patterns" value="Expressed in male germ line stem cell (sensu Vertebrata) in testis and 92 other cell types or tissues"/>
</dbReference>
<dbReference type="ExpressionAtlas" id="C9JH25">
    <property type="expression patterns" value="baseline and differential"/>
</dbReference>
<dbReference type="GO" id="GO:0016020">
    <property type="term" value="C:membrane"/>
    <property type="evidence" value="ECO:0007669"/>
    <property type="project" value="UniProtKB-SubCell"/>
</dbReference>
<dbReference type="InterPro" id="IPR052836">
    <property type="entry name" value="PRRT_domain-containing"/>
</dbReference>
<dbReference type="PANTHER" id="PTHR35578:SF6">
    <property type="entry name" value="PROLINE-RICH TRANSMEMBRANE PROTEIN 4"/>
    <property type="match status" value="1"/>
</dbReference>
<dbReference type="PANTHER" id="PTHR35578">
    <property type="entry name" value="PROLINE-RICH TRANSMEMBRANE PROTEIN 4-RELATED"/>
    <property type="match status" value="1"/>
</dbReference>